<reference key="1">
    <citation type="journal article" date="2001" name="Lancet">
        <title>Whole genome sequencing of meticillin-resistant Staphylococcus aureus.</title>
        <authorList>
            <person name="Kuroda M."/>
            <person name="Ohta T."/>
            <person name="Uchiyama I."/>
            <person name="Baba T."/>
            <person name="Yuzawa H."/>
            <person name="Kobayashi I."/>
            <person name="Cui L."/>
            <person name="Oguchi A."/>
            <person name="Aoki K."/>
            <person name="Nagai Y."/>
            <person name="Lian J.-Q."/>
            <person name="Ito T."/>
            <person name="Kanamori M."/>
            <person name="Matsumaru H."/>
            <person name="Maruyama A."/>
            <person name="Murakami H."/>
            <person name="Hosoyama A."/>
            <person name="Mizutani-Ui Y."/>
            <person name="Takahashi N.K."/>
            <person name="Sawano T."/>
            <person name="Inoue R."/>
            <person name="Kaito C."/>
            <person name="Sekimizu K."/>
            <person name="Hirakawa H."/>
            <person name="Kuhara S."/>
            <person name="Goto S."/>
            <person name="Yabuzaki J."/>
            <person name="Kanehisa M."/>
            <person name="Yamashita A."/>
            <person name="Oshima K."/>
            <person name="Furuya K."/>
            <person name="Yoshino C."/>
            <person name="Shiba T."/>
            <person name="Hattori M."/>
            <person name="Ogasawara N."/>
            <person name="Hayashi H."/>
            <person name="Hiramatsu K."/>
        </authorList>
    </citation>
    <scope>NUCLEOTIDE SEQUENCE [LARGE SCALE GENOMIC DNA]</scope>
    <source>
        <strain>N315</strain>
    </source>
</reference>
<proteinExistence type="inferred from homology"/>
<evidence type="ECO:0000250" key="1"/>
<evidence type="ECO:0000255" key="2"/>
<evidence type="ECO:0000255" key="3">
    <source>
        <dbReference type="PROSITE-ProRule" id="PRU00272"/>
    </source>
</evidence>
<evidence type="ECO:0000255" key="4">
    <source>
        <dbReference type="PROSITE-ProRule" id="PRU10048"/>
    </source>
</evidence>
<evidence type="ECO:0000255" key="5">
    <source>
        <dbReference type="PROSITE-ProRule" id="PRU10049"/>
    </source>
</evidence>
<evidence type="ECO:0000256" key="6">
    <source>
        <dbReference type="SAM" id="MobiDB-lite"/>
    </source>
</evidence>
<feature type="signal peptide" evidence="2">
    <location>
        <begin position="1"/>
        <end position="23"/>
    </location>
</feature>
<feature type="propeptide" id="PRO_0000045231" evidence="1">
    <location>
        <begin position="24"/>
        <end position="60"/>
    </location>
</feature>
<feature type="chain" id="PRO_0000045232" description="Thermonuclease">
    <location>
        <begin position="61"/>
        <end position="228"/>
    </location>
</feature>
<feature type="region of interest" description="Disordered" evidence="6">
    <location>
        <begin position="58"/>
        <end position="83"/>
    </location>
</feature>
<feature type="compositionally biased region" description="Polar residues" evidence="6">
    <location>
        <begin position="58"/>
        <end position="70"/>
    </location>
</feature>
<feature type="active site" evidence="1">
    <location>
        <position position="114"/>
    </location>
</feature>
<feature type="active site" evidence="1">
    <location>
        <position position="122"/>
    </location>
</feature>
<feature type="active site" evidence="1">
    <location>
        <position position="166"/>
    </location>
</feature>
<feature type="binding site" evidence="3">
    <location>
        <position position="100"/>
    </location>
    <ligand>
        <name>Ca(2+)</name>
        <dbReference type="ChEBI" id="CHEBI:29108"/>
    </ligand>
</feature>
<feature type="binding site" evidence="3">
    <location>
        <position position="119"/>
    </location>
    <ligand>
        <name>Ca(2+)</name>
        <dbReference type="ChEBI" id="CHEBI:29108"/>
    </ligand>
</feature>
<feature type="binding site" evidence="3">
    <location>
        <position position="120"/>
    </location>
    <ligand>
        <name>Ca(2+)</name>
        <dbReference type="ChEBI" id="CHEBI:29108"/>
    </ligand>
</feature>
<keyword id="KW-0106">Calcium</keyword>
<keyword id="KW-0255">Endonuclease</keyword>
<keyword id="KW-0378">Hydrolase</keyword>
<keyword id="KW-0479">Metal-binding</keyword>
<keyword id="KW-0540">Nuclease</keyword>
<keyword id="KW-0964">Secreted</keyword>
<keyword id="KW-0732">Signal</keyword>
<keyword id="KW-0865">Zymogen</keyword>
<gene>
    <name type="primary">nuc</name>
    <name type="ordered locus">SA0746</name>
</gene>
<dbReference type="EC" id="3.1.31.1"/>
<dbReference type="EMBL" id="BA000018">
    <property type="protein sequence ID" value="BAB41979.1"/>
    <property type="molecule type" value="Genomic_DNA"/>
</dbReference>
<dbReference type="PIR" id="H89852">
    <property type="entry name" value="H89852"/>
</dbReference>
<dbReference type="RefSeq" id="WP_000141557.1">
    <property type="nucleotide sequence ID" value="NC_002745.2"/>
</dbReference>
<dbReference type="BMRB" id="Q7A6P2"/>
<dbReference type="SMR" id="Q7A6P2"/>
<dbReference type="EnsemblBacteria" id="BAB41979">
    <property type="protein sequence ID" value="BAB41979"/>
    <property type="gene ID" value="BAB41979"/>
</dbReference>
<dbReference type="KEGG" id="sau:SA0746"/>
<dbReference type="HOGENOM" id="CLU_046484_5_2_9"/>
<dbReference type="BRENDA" id="3.1.31.1">
    <property type="organism ID" value="3352"/>
</dbReference>
<dbReference type="GO" id="GO:0005576">
    <property type="term" value="C:extracellular region"/>
    <property type="evidence" value="ECO:0007669"/>
    <property type="project" value="UniProtKB-SubCell"/>
</dbReference>
<dbReference type="GO" id="GO:0016894">
    <property type="term" value="F:endonuclease activity, active with either ribo- or deoxyribonucleic acids and producing 3'-phosphomonoesters"/>
    <property type="evidence" value="ECO:0007669"/>
    <property type="project" value="UniProtKB-EC"/>
</dbReference>
<dbReference type="GO" id="GO:0046872">
    <property type="term" value="F:metal ion binding"/>
    <property type="evidence" value="ECO:0007669"/>
    <property type="project" value="UniProtKB-KW"/>
</dbReference>
<dbReference type="GO" id="GO:0003676">
    <property type="term" value="F:nucleic acid binding"/>
    <property type="evidence" value="ECO:0007669"/>
    <property type="project" value="InterPro"/>
</dbReference>
<dbReference type="CDD" id="cd00175">
    <property type="entry name" value="SNc"/>
    <property type="match status" value="1"/>
</dbReference>
<dbReference type="FunFam" id="2.40.50.90:FF:000025">
    <property type="entry name" value="Thermonuclease"/>
    <property type="match status" value="1"/>
</dbReference>
<dbReference type="Gene3D" id="2.40.50.90">
    <property type="match status" value="1"/>
</dbReference>
<dbReference type="InterPro" id="IPR035437">
    <property type="entry name" value="SNase_OB-fold_sf"/>
</dbReference>
<dbReference type="InterPro" id="IPR016071">
    <property type="entry name" value="Staphylococal_nuclease_OB-fold"/>
</dbReference>
<dbReference type="InterPro" id="IPR002071">
    <property type="entry name" value="Thermonucl_AS"/>
</dbReference>
<dbReference type="PANTHER" id="PTHR12302">
    <property type="entry name" value="EBNA2 BINDING PROTEIN P100"/>
    <property type="match status" value="1"/>
</dbReference>
<dbReference type="PANTHER" id="PTHR12302:SF3">
    <property type="entry name" value="SERINE_THREONINE-PROTEIN KINASE 31"/>
    <property type="match status" value="1"/>
</dbReference>
<dbReference type="Pfam" id="PF00565">
    <property type="entry name" value="SNase"/>
    <property type="match status" value="1"/>
</dbReference>
<dbReference type="SMART" id="SM00318">
    <property type="entry name" value="SNc"/>
    <property type="match status" value="1"/>
</dbReference>
<dbReference type="SUPFAM" id="SSF50199">
    <property type="entry name" value="Staphylococcal nuclease"/>
    <property type="match status" value="1"/>
</dbReference>
<dbReference type="PROSITE" id="PS01123">
    <property type="entry name" value="TNASE_1"/>
    <property type="match status" value="1"/>
</dbReference>
<dbReference type="PROSITE" id="PS01284">
    <property type="entry name" value="TNASE_2"/>
    <property type="match status" value="1"/>
</dbReference>
<dbReference type="PROSITE" id="PS50830">
    <property type="entry name" value="TNASE_3"/>
    <property type="match status" value="1"/>
</dbReference>
<protein>
    <recommendedName>
        <fullName>Thermonuclease</fullName>
        <shortName>TNase</shortName>
        <ecNumber>3.1.31.1</ecNumber>
    </recommendedName>
    <alternativeName>
        <fullName>Micrococcal nuclease</fullName>
    </alternativeName>
    <alternativeName>
        <fullName>Staphylococcal nuclease</fullName>
    </alternativeName>
</protein>
<comment type="function">
    <text evidence="1">Enzyme that catalyzes the hydrolysis of both DNA and RNA at the 5' position of the phosphodiester bond.</text>
</comment>
<comment type="catalytic activity">
    <reaction evidence="4 5">
        <text>Endonucleolytic cleavage to nucleoside 3'-phosphates and 3'-phosphooligonucleotide end-products.</text>
        <dbReference type="EC" id="3.1.31.1"/>
    </reaction>
</comment>
<comment type="cofactor">
    <cofactor evidence="1">
        <name>Ca(2+)</name>
        <dbReference type="ChEBI" id="CHEBI:29108"/>
    </cofactor>
    <text evidence="1">Binds 1 Ca(2+) ion per subunit.</text>
</comment>
<comment type="subcellular location">
    <subcellularLocation>
        <location evidence="1">Secreted</location>
    </subcellularLocation>
</comment>
<comment type="similarity">
    <text evidence="3">Belongs to the thermonuclease family.</text>
</comment>
<sequence length="228" mass="25090">MTEYLLSAGICMAIVSILLIGMAISNVSKGQYAKRFFFFATSCLVLTLVVVSSLSSSANASQTDNGVNRSGSEDPTVYSATSTKKLHKEPATLIKAIDGDTVKLMYKGQPMTFRLLLVDTPETKHPKKGVEKYGPEASAFTKKMVENANKIEVEFDKGQRTDKYGRGLAYIYADGKMVNEALVRQGLAKVAYVYKPNNTHEQLLRKSEAQAKKEKLNIWSEDNADSGQ</sequence>
<name>NUC_STAAN</name>
<organism>
    <name type="scientific">Staphylococcus aureus (strain N315)</name>
    <dbReference type="NCBI Taxonomy" id="158879"/>
    <lineage>
        <taxon>Bacteria</taxon>
        <taxon>Bacillati</taxon>
        <taxon>Bacillota</taxon>
        <taxon>Bacilli</taxon>
        <taxon>Bacillales</taxon>
        <taxon>Staphylococcaceae</taxon>
        <taxon>Staphylococcus</taxon>
    </lineage>
</organism>
<accession>Q7A6P2</accession>